<gene>
    <name evidence="1" type="primary">rplK</name>
    <name type="ordered locus">Mnod_1895</name>
</gene>
<protein>
    <recommendedName>
        <fullName evidence="1">Large ribosomal subunit protein uL11</fullName>
    </recommendedName>
    <alternativeName>
        <fullName evidence="2">50S ribosomal protein L11</fullName>
    </alternativeName>
</protein>
<keyword id="KW-0488">Methylation</keyword>
<keyword id="KW-1185">Reference proteome</keyword>
<keyword id="KW-0687">Ribonucleoprotein</keyword>
<keyword id="KW-0689">Ribosomal protein</keyword>
<keyword id="KW-0694">RNA-binding</keyword>
<keyword id="KW-0699">rRNA-binding</keyword>
<proteinExistence type="inferred from homology"/>
<accession>B8IS72</accession>
<sequence>MAKKITGYVKLQVPAGAANPSPPIGPALGQRGLNIMEFCKAFNAKTAQIEKGTPIPVIITAYQDRSFTFEMKQPPVSFFLKKAAGLKIGKKPASGSKTPGKGAPAGKVTEAQIREIAEKKMPDLNCDSVDAAVAMIRGSARAMGLEITG</sequence>
<comment type="function">
    <text evidence="1">Forms part of the ribosomal stalk which helps the ribosome interact with GTP-bound translation factors.</text>
</comment>
<comment type="subunit">
    <text evidence="1">Part of the ribosomal stalk of the 50S ribosomal subunit. Interacts with L10 and the large rRNA to form the base of the stalk. L10 forms an elongated spine to which L12 dimers bind in a sequential fashion forming a multimeric L10(L12)X complex.</text>
</comment>
<comment type="PTM">
    <text evidence="1">One or more lysine residues are methylated.</text>
</comment>
<comment type="similarity">
    <text evidence="1">Belongs to the universal ribosomal protein uL11 family.</text>
</comment>
<evidence type="ECO:0000255" key="1">
    <source>
        <dbReference type="HAMAP-Rule" id="MF_00736"/>
    </source>
</evidence>
<evidence type="ECO:0000305" key="2"/>
<name>RL11_METNO</name>
<reference key="1">
    <citation type="submission" date="2009-01" db="EMBL/GenBank/DDBJ databases">
        <title>Complete sequence of chromosome of Methylobacterium nodulans ORS 2060.</title>
        <authorList>
            <consortium name="US DOE Joint Genome Institute"/>
            <person name="Lucas S."/>
            <person name="Copeland A."/>
            <person name="Lapidus A."/>
            <person name="Glavina del Rio T."/>
            <person name="Dalin E."/>
            <person name="Tice H."/>
            <person name="Bruce D."/>
            <person name="Goodwin L."/>
            <person name="Pitluck S."/>
            <person name="Sims D."/>
            <person name="Brettin T."/>
            <person name="Detter J.C."/>
            <person name="Han C."/>
            <person name="Larimer F."/>
            <person name="Land M."/>
            <person name="Hauser L."/>
            <person name="Kyrpides N."/>
            <person name="Ivanova N."/>
            <person name="Marx C.J."/>
            <person name="Richardson P."/>
        </authorList>
    </citation>
    <scope>NUCLEOTIDE SEQUENCE [LARGE SCALE GENOMIC DNA]</scope>
    <source>
        <strain>LMG 21967 / CNCM I-2342 / ORS 2060</strain>
    </source>
</reference>
<dbReference type="EMBL" id="CP001349">
    <property type="protein sequence ID" value="ACL56884.1"/>
    <property type="molecule type" value="Genomic_DNA"/>
</dbReference>
<dbReference type="RefSeq" id="WP_015928575.1">
    <property type="nucleotide sequence ID" value="NC_011894.1"/>
</dbReference>
<dbReference type="SMR" id="B8IS72"/>
<dbReference type="STRING" id="460265.Mnod_1895"/>
<dbReference type="KEGG" id="mno:Mnod_1895"/>
<dbReference type="eggNOG" id="COG0080">
    <property type="taxonomic scope" value="Bacteria"/>
</dbReference>
<dbReference type="HOGENOM" id="CLU_074237_2_0_5"/>
<dbReference type="OrthoDB" id="9802408at2"/>
<dbReference type="Proteomes" id="UP000008207">
    <property type="component" value="Chromosome"/>
</dbReference>
<dbReference type="GO" id="GO:0022625">
    <property type="term" value="C:cytosolic large ribosomal subunit"/>
    <property type="evidence" value="ECO:0007669"/>
    <property type="project" value="TreeGrafter"/>
</dbReference>
<dbReference type="GO" id="GO:0070180">
    <property type="term" value="F:large ribosomal subunit rRNA binding"/>
    <property type="evidence" value="ECO:0007669"/>
    <property type="project" value="UniProtKB-UniRule"/>
</dbReference>
<dbReference type="GO" id="GO:0003735">
    <property type="term" value="F:structural constituent of ribosome"/>
    <property type="evidence" value="ECO:0007669"/>
    <property type="project" value="InterPro"/>
</dbReference>
<dbReference type="GO" id="GO:0006412">
    <property type="term" value="P:translation"/>
    <property type="evidence" value="ECO:0007669"/>
    <property type="project" value="UniProtKB-UniRule"/>
</dbReference>
<dbReference type="CDD" id="cd00349">
    <property type="entry name" value="Ribosomal_L11"/>
    <property type="match status" value="1"/>
</dbReference>
<dbReference type="FunFam" id="3.30.1550.10:FF:000001">
    <property type="entry name" value="50S ribosomal protein L11"/>
    <property type="match status" value="1"/>
</dbReference>
<dbReference type="Gene3D" id="1.10.10.250">
    <property type="entry name" value="Ribosomal protein L11, C-terminal domain"/>
    <property type="match status" value="1"/>
</dbReference>
<dbReference type="Gene3D" id="3.30.1550.10">
    <property type="entry name" value="Ribosomal protein L11/L12, N-terminal domain"/>
    <property type="match status" value="1"/>
</dbReference>
<dbReference type="HAMAP" id="MF_00736">
    <property type="entry name" value="Ribosomal_uL11"/>
    <property type="match status" value="1"/>
</dbReference>
<dbReference type="InterPro" id="IPR000911">
    <property type="entry name" value="Ribosomal_uL11"/>
</dbReference>
<dbReference type="InterPro" id="IPR006519">
    <property type="entry name" value="Ribosomal_uL11_bac-typ"/>
</dbReference>
<dbReference type="InterPro" id="IPR020783">
    <property type="entry name" value="Ribosomal_uL11_C"/>
</dbReference>
<dbReference type="InterPro" id="IPR036769">
    <property type="entry name" value="Ribosomal_uL11_C_sf"/>
</dbReference>
<dbReference type="InterPro" id="IPR020784">
    <property type="entry name" value="Ribosomal_uL11_N"/>
</dbReference>
<dbReference type="InterPro" id="IPR036796">
    <property type="entry name" value="Ribosomal_uL11_N_sf"/>
</dbReference>
<dbReference type="NCBIfam" id="TIGR01632">
    <property type="entry name" value="L11_bact"/>
    <property type="match status" value="1"/>
</dbReference>
<dbReference type="PANTHER" id="PTHR11661">
    <property type="entry name" value="60S RIBOSOMAL PROTEIN L12"/>
    <property type="match status" value="1"/>
</dbReference>
<dbReference type="PANTHER" id="PTHR11661:SF1">
    <property type="entry name" value="LARGE RIBOSOMAL SUBUNIT PROTEIN UL11M"/>
    <property type="match status" value="1"/>
</dbReference>
<dbReference type="Pfam" id="PF00298">
    <property type="entry name" value="Ribosomal_L11"/>
    <property type="match status" value="1"/>
</dbReference>
<dbReference type="Pfam" id="PF03946">
    <property type="entry name" value="Ribosomal_L11_N"/>
    <property type="match status" value="1"/>
</dbReference>
<dbReference type="SMART" id="SM00649">
    <property type="entry name" value="RL11"/>
    <property type="match status" value="1"/>
</dbReference>
<dbReference type="SUPFAM" id="SSF54747">
    <property type="entry name" value="Ribosomal L11/L12e N-terminal domain"/>
    <property type="match status" value="1"/>
</dbReference>
<dbReference type="SUPFAM" id="SSF46906">
    <property type="entry name" value="Ribosomal protein L11, C-terminal domain"/>
    <property type="match status" value="1"/>
</dbReference>
<organism>
    <name type="scientific">Methylobacterium nodulans (strain LMG 21967 / CNCM I-2342 / ORS 2060)</name>
    <dbReference type="NCBI Taxonomy" id="460265"/>
    <lineage>
        <taxon>Bacteria</taxon>
        <taxon>Pseudomonadati</taxon>
        <taxon>Pseudomonadota</taxon>
        <taxon>Alphaproteobacteria</taxon>
        <taxon>Hyphomicrobiales</taxon>
        <taxon>Methylobacteriaceae</taxon>
        <taxon>Methylobacterium</taxon>
    </lineage>
</organism>
<feature type="chain" id="PRO_1000195668" description="Large ribosomal subunit protein uL11">
    <location>
        <begin position="1"/>
        <end position="149"/>
    </location>
</feature>